<gene>
    <name evidence="1" type="primary">rplX</name>
    <name type="ordered locus">COXBURSA331_A0348</name>
</gene>
<name>RL24_COXBR</name>
<organism>
    <name type="scientific">Coxiella burnetii (strain RSA 331 / Henzerling II)</name>
    <dbReference type="NCBI Taxonomy" id="360115"/>
    <lineage>
        <taxon>Bacteria</taxon>
        <taxon>Pseudomonadati</taxon>
        <taxon>Pseudomonadota</taxon>
        <taxon>Gammaproteobacteria</taxon>
        <taxon>Legionellales</taxon>
        <taxon>Coxiellaceae</taxon>
        <taxon>Coxiella</taxon>
    </lineage>
</organism>
<dbReference type="EMBL" id="CP000890">
    <property type="protein sequence ID" value="ABX78887.1"/>
    <property type="molecule type" value="Genomic_DNA"/>
</dbReference>
<dbReference type="RefSeq" id="WP_005771523.1">
    <property type="nucleotide sequence ID" value="NC_010117.1"/>
</dbReference>
<dbReference type="SMR" id="A9NAY1"/>
<dbReference type="KEGG" id="cbs:COXBURSA331_A0348"/>
<dbReference type="HOGENOM" id="CLU_093315_2_2_6"/>
<dbReference type="GO" id="GO:1990904">
    <property type="term" value="C:ribonucleoprotein complex"/>
    <property type="evidence" value="ECO:0007669"/>
    <property type="project" value="UniProtKB-KW"/>
</dbReference>
<dbReference type="GO" id="GO:0005840">
    <property type="term" value="C:ribosome"/>
    <property type="evidence" value="ECO:0007669"/>
    <property type="project" value="UniProtKB-KW"/>
</dbReference>
<dbReference type="GO" id="GO:0019843">
    <property type="term" value="F:rRNA binding"/>
    <property type="evidence" value="ECO:0007669"/>
    <property type="project" value="UniProtKB-UniRule"/>
</dbReference>
<dbReference type="GO" id="GO:0003735">
    <property type="term" value="F:structural constituent of ribosome"/>
    <property type="evidence" value="ECO:0007669"/>
    <property type="project" value="InterPro"/>
</dbReference>
<dbReference type="GO" id="GO:0006412">
    <property type="term" value="P:translation"/>
    <property type="evidence" value="ECO:0007669"/>
    <property type="project" value="UniProtKB-UniRule"/>
</dbReference>
<dbReference type="CDD" id="cd06089">
    <property type="entry name" value="KOW_RPL26"/>
    <property type="match status" value="1"/>
</dbReference>
<dbReference type="FunFam" id="2.30.30.30:FF:000004">
    <property type="entry name" value="50S ribosomal protein L24"/>
    <property type="match status" value="1"/>
</dbReference>
<dbReference type="Gene3D" id="2.30.30.30">
    <property type="match status" value="1"/>
</dbReference>
<dbReference type="HAMAP" id="MF_01326_B">
    <property type="entry name" value="Ribosomal_uL24_B"/>
    <property type="match status" value="1"/>
</dbReference>
<dbReference type="InterPro" id="IPR005824">
    <property type="entry name" value="KOW"/>
</dbReference>
<dbReference type="InterPro" id="IPR014722">
    <property type="entry name" value="Rib_uL2_dom2"/>
</dbReference>
<dbReference type="InterPro" id="IPR003256">
    <property type="entry name" value="Ribosomal_uL24"/>
</dbReference>
<dbReference type="InterPro" id="IPR005825">
    <property type="entry name" value="Ribosomal_uL24_CS"/>
</dbReference>
<dbReference type="InterPro" id="IPR041988">
    <property type="entry name" value="Ribosomal_uL24_KOW"/>
</dbReference>
<dbReference type="InterPro" id="IPR008991">
    <property type="entry name" value="Translation_prot_SH3-like_sf"/>
</dbReference>
<dbReference type="NCBIfam" id="TIGR01079">
    <property type="entry name" value="rplX_bact"/>
    <property type="match status" value="1"/>
</dbReference>
<dbReference type="PANTHER" id="PTHR12903">
    <property type="entry name" value="MITOCHONDRIAL RIBOSOMAL PROTEIN L24"/>
    <property type="match status" value="1"/>
</dbReference>
<dbReference type="Pfam" id="PF00467">
    <property type="entry name" value="KOW"/>
    <property type="match status" value="1"/>
</dbReference>
<dbReference type="Pfam" id="PF17136">
    <property type="entry name" value="ribosomal_L24"/>
    <property type="match status" value="1"/>
</dbReference>
<dbReference type="SMART" id="SM00739">
    <property type="entry name" value="KOW"/>
    <property type="match status" value="1"/>
</dbReference>
<dbReference type="SUPFAM" id="SSF50104">
    <property type="entry name" value="Translation proteins SH3-like domain"/>
    <property type="match status" value="1"/>
</dbReference>
<dbReference type="PROSITE" id="PS01108">
    <property type="entry name" value="RIBOSOMAL_L24"/>
    <property type="match status" value="1"/>
</dbReference>
<keyword id="KW-0687">Ribonucleoprotein</keyword>
<keyword id="KW-0689">Ribosomal protein</keyword>
<keyword id="KW-0694">RNA-binding</keyword>
<keyword id="KW-0699">rRNA-binding</keyword>
<evidence type="ECO:0000255" key="1">
    <source>
        <dbReference type="HAMAP-Rule" id="MF_01326"/>
    </source>
</evidence>
<evidence type="ECO:0000305" key="2"/>
<feature type="chain" id="PRO_0000355671" description="Large ribosomal subunit protein uL24">
    <location>
        <begin position="1"/>
        <end position="107"/>
    </location>
</feature>
<accession>A9NAY1</accession>
<sequence length="107" mass="11791">MAIKKIKKDDTVIVITGRDKGRQGKVLKVLPNSRLLVEGINLVKKHVKPNPNKNEQGGILERELSIHVSNVAIYNPAAKKADRVGIKTLEDGSKVRIFKSNGEVIDV</sequence>
<comment type="function">
    <text evidence="1">One of two assembly initiator proteins, it binds directly to the 5'-end of the 23S rRNA, where it nucleates assembly of the 50S subunit.</text>
</comment>
<comment type="function">
    <text evidence="1">One of the proteins that surrounds the polypeptide exit tunnel on the outside of the subunit.</text>
</comment>
<comment type="subunit">
    <text evidence="1">Part of the 50S ribosomal subunit.</text>
</comment>
<comment type="similarity">
    <text evidence="1">Belongs to the universal ribosomal protein uL24 family.</text>
</comment>
<protein>
    <recommendedName>
        <fullName evidence="1">Large ribosomal subunit protein uL24</fullName>
    </recommendedName>
    <alternativeName>
        <fullName evidence="2">50S ribosomal protein L24</fullName>
    </alternativeName>
</protein>
<reference key="1">
    <citation type="submission" date="2007-11" db="EMBL/GenBank/DDBJ databases">
        <title>Genome sequencing of phylogenetically and phenotypically diverse Coxiella burnetii isolates.</title>
        <authorList>
            <person name="Seshadri R."/>
            <person name="Samuel J.E."/>
        </authorList>
    </citation>
    <scope>NUCLEOTIDE SEQUENCE [LARGE SCALE GENOMIC DNA]</scope>
    <source>
        <strain>RSA 331 / Henzerling II</strain>
    </source>
</reference>
<proteinExistence type="inferred from homology"/>